<comment type="catalytic activity">
    <reaction evidence="1">
        <text>1-(2-carboxyphenylamino)-1-deoxy-D-ribulose 5-phosphate + H(+) = (1S,2R)-1-C-(indol-3-yl)glycerol 3-phosphate + CO2 + H2O</text>
        <dbReference type="Rhea" id="RHEA:23476"/>
        <dbReference type="ChEBI" id="CHEBI:15377"/>
        <dbReference type="ChEBI" id="CHEBI:15378"/>
        <dbReference type="ChEBI" id="CHEBI:16526"/>
        <dbReference type="ChEBI" id="CHEBI:58613"/>
        <dbReference type="ChEBI" id="CHEBI:58866"/>
        <dbReference type="EC" id="4.1.1.48"/>
    </reaction>
</comment>
<comment type="pathway">
    <text evidence="1">Amino-acid biosynthesis; L-tryptophan biosynthesis; L-tryptophan from chorismate: step 4/5.</text>
</comment>
<comment type="similarity">
    <text evidence="1">Belongs to the TrpC family.</text>
</comment>
<name>TRPC_PYRFU</name>
<feature type="chain" id="PRO_0000154299" description="Indole-3-glycerol phosphate synthase">
    <location>
        <begin position="1"/>
        <end position="228"/>
    </location>
</feature>
<organism>
    <name type="scientific">Pyrococcus furiosus (strain ATCC 43587 / DSM 3638 / JCM 8422 / Vc1)</name>
    <dbReference type="NCBI Taxonomy" id="186497"/>
    <lineage>
        <taxon>Archaea</taxon>
        <taxon>Methanobacteriati</taxon>
        <taxon>Methanobacteriota</taxon>
        <taxon>Thermococci</taxon>
        <taxon>Thermococcales</taxon>
        <taxon>Thermococcaceae</taxon>
        <taxon>Pyrococcus</taxon>
    </lineage>
</organism>
<evidence type="ECO:0000255" key="1">
    <source>
        <dbReference type="HAMAP-Rule" id="MF_00134"/>
    </source>
</evidence>
<gene>
    <name evidence="1" type="primary">trpC</name>
    <name type="ordered locus">PF1711</name>
</gene>
<protein>
    <recommendedName>
        <fullName evidence="1">Indole-3-glycerol phosphate synthase</fullName>
        <shortName evidence="1">IGPS</shortName>
        <ecNumber evidence="1">4.1.1.48</ecNumber>
    </recommendedName>
</protein>
<accession>Q8U088</accession>
<sequence>MVIFGLSRAIRKAKKNPIIAEIKVYSPKYGDLLRGRDPLRILRAYEEAGAVGISYITDQKYFKGSFDFLKVLCKETTLPVLRKDFITSKEEIEKTAEVGASAVLLITRILKDKLPEFVDYAKEHGLDTLVEVHTEDELKLAIKTNSTMIGINNRDIGKLEMDDGDVSLTEILAPKIPGKFVKVSESGIATLEDLKRALRVADAALIGTALMKAENPAELLKKFVEAEI</sequence>
<proteinExistence type="inferred from homology"/>
<keyword id="KW-0028">Amino-acid biosynthesis</keyword>
<keyword id="KW-0057">Aromatic amino acid biosynthesis</keyword>
<keyword id="KW-0210">Decarboxylase</keyword>
<keyword id="KW-0456">Lyase</keyword>
<keyword id="KW-1185">Reference proteome</keyword>
<keyword id="KW-0822">Tryptophan biosynthesis</keyword>
<dbReference type="EC" id="4.1.1.48" evidence="1"/>
<dbReference type="EMBL" id="AE009950">
    <property type="protein sequence ID" value="AAL81835.1"/>
    <property type="molecule type" value="Genomic_DNA"/>
</dbReference>
<dbReference type="RefSeq" id="WP_011012857.1">
    <property type="nucleotide sequence ID" value="NZ_CP023154.1"/>
</dbReference>
<dbReference type="SMR" id="Q8U088"/>
<dbReference type="STRING" id="186497.PF1711"/>
<dbReference type="PaxDb" id="186497-PF1711"/>
<dbReference type="GeneID" id="41713542"/>
<dbReference type="KEGG" id="pfu:PF1711"/>
<dbReference type="PATRIC" id="fig|186497.12.peg.1779"/>
<dbReference type="eggNOG" id="arCOG01088">
    <property type="taxonomic scope" value="Archaea"/>
</dbReference>
<dbReference type="HOGENOM" id="CLU_034247_0_1_2"/>
<dbReference type="OrthoDB" id="15223at2157"/>
<dbReference type="PhylomeDB" id="Q8U088"/>
<dbReference type="SABIO-RK" id="Q8U088"/>
<dbReference type="UniPathway" id="UPA00035">
    <property type="reaction ID" value="UER00043"/>
</dbReference>
<dbReference type="Proteomes" id="UP000001013">
    <property type="component" value="Chromosome"/>
</dbReference>
<dbReference type="GO" id="GO:0004425">
    <property type="term" value="F:indole-3-glycerol-phosphate synthase activity"/>
    <property type="evidence" value="ECO:0007669"/>
    <property type="project" value="UniProtKB-UniRule"/>
</dbReference>
<dbReference type="GO" id="GO:0004640">
    <property type="term" value="F:phosphoribosylanthranilate isomerase activity"/>
    <property type="evidence" value="ECO:0007669"/>
    <property type="project" value="TreeGrafter"/>
</dbReference>
<dbReference type="GO" id="GO:0000162">
    <property type="term" value="P:L-tryptophan biosynthetic process"/>
    <property type="evidence" value="ECO:0007669"/>
    <property type="project" value="UniProtKB-UniRule"/>
</dbReference>
<dbReference type="CDD" id="cd00331">
    <property type="entry name" value="IGPS"/>
    <property type="match status" value="1"/>
</dbReference>
<dbReference type="Gene3D" id="3.20.20.70">
    <property type="entry name" value="Aldolase class I"/>
    <property type="match status" value="1"/>
</dbReference>
<dbReference type="HAMAP" id="MF_00134_A">
    <property type="entry name" value="IGPS_A"/>
    <property type="match status" value="1"/>
</dbReference>
<dbReference type="InterPro" id="IPR013785">
    <property type="entry name" value="Aldolase_TIM"/>
</dbReference>
<dbReference type="InterPro" id="IPR045186">
    <property type="entry name" value="Indole-3-glycerol_P_synth"/>
</dbReference>
<dbReference type="InterPro" id="IPR013798">
    <property type="entry name" value="Indole-3-glycerol_P_synth_dom"/>
</dbReference>
<dbReference type="InterPro" id="IPR001468">
    <property type="entry name" value="Indole-3-GlycerolPSynthase_CS"/>
</dbReference>
<dbReference type="InterPro" id="IPR011060">
    <property type="entry name" value="RibuloseP-bd_barrel"/>
</dbReference>
<dbReference type="NCBIfam" id="NF001376">
    <property type="entry name" value="PRK00278.2-3"/>
    <property type="match status" value="1"/>
</dbReference>
<dbReference type="PANTHER" id="PTHR22854:SF2">
    <property type="entry name" value="INDOLE-3-GLYCEROL-PHOSPHATE SYNTHASE"/>
    <property type="match status" value="1"/>
</dbReference>
<dbReference type="PANTHER" id="PTHR22854">
    <property type="entry name" value="TRYPTOPHAN BIOSYNTHESIS PROTEIN"/>
    <property type="match status" value="1"/>
</dbReference>
<dbReference type="Pfam" id="PF00218">
    <property type="entry name" value="IGPS"/>
    <property type="match status" value="1"/>
</dbReference>
<dbReference type="SUPFAM" id="SSF51366">
    <property type="entry name" value="Ribulose-phoshate binding barrel"/>
    <property type="match status" value="1"/>
</dbReference>
<dbReference type="PROSITE" id="PS00614">
    <property type="entry name" value="IGPS"/>
    <property type="match status" value="1"/>
</dbReference>
<reference key="1">
    <citation type="journal article" date="1999" name="Genetics">
        <title>Divergence of the hyperthermophilic archaea Pyrococcus furiosus and P. horikoshii inferred from complete genomic sequences.</title>
        <authorList>
            <person name="Maeder D.L."/>
            <person name="Weiss R.B."/>
            <person name="Dunn D.M."/>
            <person name="Cherry J.L."/>
            <person name="Gonzalez J.M."/>
            <person name="DiRuggiero J."/>
            <person name="Robb F.T."/>
        </authorList>
    </citation>
    <scope>NUCLEOTIDE SEQUENCE [LARGE SCALE GENOMIC DNA]</scope>
    <source>
        <strain>ATCC 43587 / DSM 3638 / JCM 8422 / Vc1</strain>
    </source>
</reference>